<reference key="1">
    <citation type="journal article" date="2010" name="PLoS ONE">
        <title>Dual function of a bee venom serine protease: prophenoloxidase-activating factor in arthropods and fibrin(ogen)olytic enzyme in mammals.</title>
        <authorList>
            <person name="Choo Y.M."/>
            <person name="Lee K.S."/>
            <person name="Yoon H.J."/>
            <person name="Kim B.Y."/>
            <person name="Sohn M.R."/>
            <person name="Roh J.Y."/>
            <person name="Je Y.H."/>
            <person name="Kim N.J."/>
            <person name="Kim I."/>
            <person name="Woo S.D."/>
            <person name="Sohn H.D."/>
            <person name="Jin B.R."/>
        </authorList>
    </citation>
    <scope>NUCLEOTIDE SEQUENCE [GENOMIC DNA / MRNA]</scope>
    <scope>PARTIAL PROTEIN SEQUENCE</scope>
    <scope>FUNCTION</scope>
    <scope>SUBCELLULAR LOCATION</scope>
    <source>
        <tissue>Venom</tissue>
        <tissue>Venom gland</tissue>
    </source>
</reference>
<reference key="2">
    <citation type="journal article" date="2012" name="PLoS ONE">
        <title>Antifibrinolytic role of a bee venom serine protease inhibitor that acts as a plasmin inhibitor.</title>
        <authorList>
            <person name="Choo Y.M."/>
            <person name="Lee K.S."/>
            <person name="Yoon H.J."/>
            <person name="Qiu Y."/>
            <person name="Wan H."/>
            <person name="Sohn M.R."/>
            <person name="Sohn H.D."/>
            <person name="Jin B.R."/>
        </authorList>
    </citation>
    <scope>FUNCTION</scope>
</reference>
<comment type="function">
    <text evidence="7 8">Multifunctional venom serine protease (PubMed:20454652). In insects, it acts as an arthropod prophenoloxidase-activating factor, thereby triggering the phenoloxidase cascade (PubMed:20454652). When injected into larvae, it induces a lethal melanization response in target insects by modulating the innate immune response (PubMed:20454652). In mammals, it converts fibrinogen into fibrin, activates prothrombin, and also degrades fibrin (PubMed:20454652). In mammal, it may act in a cooperative manner with the serine protease inhibitor Bi-KTI (AC G3LH89) to promote the spread of bee venom under anti-bleeding conditions (PubMed:22359676).</text>
</comment>
<comment type="subcellular location">
    <subcellularLocation>
        <location evidence="7">Secreted</location>
    </subcellularLocation>
</comment>
<comment type="tissue specificity">
    <text evidence="10">Expressed by the venom gland.</text>
</comment>
<comment type="domain">
    <text evidence="6">The clip domain consists of 35-55 residues which are 'knitted' together usually by 3 conserved disulfide bonds forming a clip-like compact structure.</text>
</comment>
<comment type="miscellaneous">
    <text evidence="10">Negative results: does not activate plasminogen.</text>
</comment>
<comment type="similarity">
    <text evidence="6">Belongs to the peptidase S1 family. CLIP subfamily.</text>
</comment>
<organism>
    <name type="scientific">Bombus ignitus</name>
    <name type="common">Bumblebee</name>
    <dbReference type="NCBI Taxonomy" id="130704"/>
    <lineage>
        <taxon>Eukaryota</taxon>
        <taxon>Metazoa</taxon>
        <taxon>Ecdysozoa</taxon>
        <taxon>Arthropoda</taxon>
        <taxon>Hexapoda</taxon>
        <taxon>Insecta</taxon>
        <taxon>Pterygota</taxon>
        <taxon>Neoptera</taxon>
        <taxon>Endopterygota</taxon>
        <taxon>Hymenoptera</taxon>
        <taxon>Apocrita</taxon>
        <taxon>Aculeata</taxon>
        <taxon>Apoidea</taxon>
        <taxon>Anthophila</taxon>
        <taxon>Apidae</taxon>
        <taxon>Bombus</taxon>
        <taxon>Bombus</taxon>
    </lineage>
</organism>
<feature type="signal peptide" evidence="4">
    <location>
        <begin position="1"/>
        <end position="26"/>
    </location>
</feature>
<feature type="propeptide" id="PRO_0000429470">
    <location>
        <begin position="27"/>
        <end position="113"/>
    </location>
</feature>
<feature type="chain" id="PRO_0000429471" description="Venom serine protease Bi-VSP">
    <location>
        <begin position="114"/>
        <end position="360"/>
    </location>
</feature>
<feature type="domain" description="Clip" evidence="6">
    <location>
        <begin position="28"/>
        <end position="79"/>
    </location>
</feature>
<feature type="domain" description="Peptidase S1" evidence="5">
    <location>
        <begin position="114"/>
        <end position="360"/>
    </location>
</feature>
<feature type="active site" description="Charge relay system" evidence="1">
    <location>
        <position position="162"/>
    </location>
</feature>
<feature type="active site" description="Charge relay system" evidence="1">
    <location>
        <position position="210"/>
    </location>
</feature>
<feature type="active site" description="Charge relay system" evidence="1">
    <location>
        <position position="311"/>
    </location>
</feature>
<feature type="binding site" evidence="2">
    <location>
        <position position="176"/>
    </location>
    <ligand>
        <name>Ca(2+)</name>
        <dbReference type="ChEBI" id="CHEBI:29108"/>
    </ligand>
</feature>
<feature type="binding site" evidence="2">
    <location>
        <position position="178"/>
    </location>
    <ligand>
        <name>Ca(2+)</name>
        <dbReference type="ChEBI" id="CHEBI:29108"/>
    </ligand>
</feature>
<feature type="binding site" evidence="2">
    <location>
        <position position="181"/>
    </location>
    <ligand>
        <name>Ca(2+)</name>
        <dbReference type="ChEBI" id="CHEBI:29108"/>
    </ligand>
</feature>
<feature type="binding site" evidence="2">
    <location>
        <position position="184"/>
    </location>
    <ligand>
        <name>Ca(2+)</name>
        <dbReference type="ChEBI" id="CHEBI:29108"/>
    </ligand>
</feature>
<feature type="glycosylation site" description="N-linked (GlcNAc...) asparagine" evidence="4">
    <location>
        <position position="108"/>
    </location>
</feature>
<feature type="disulfide bond" evidence="6">
    <location>
        <begin position="29"/>
        <end position="78"/>
    </location>
</feature>
<feature type="disulfide bond" evidence="6">
    <location>
        <begin position="39"/>
        <end position="68"/>
    </location>
</feature>
<feature type="disulfide bond" evidence="6">
    <location>
        <begin position="45"/>
        <end position="79"/>
    </location>
</feature>
<feature type="disulfide bond" evidence="3">
    <location>
        <begin position="104"/>
        <end position="230"/>
    </location>
</feature>
<feature type="disulfide bond" evidence="5">
    <location>
        <begin position="147"/>
        <end position="163"/>
    </location>
</feature>
<feature type="disulfide bond" evidence="5">
    <location>
        <begin position="278"/>
        <end position="296"/>
    </location>
</feature>
<feature type="disulfide bond" evidence="5">
    <location>
        <begin position="307"/>
        <end position="335"/>
    </location>
</feature>
<protein>
    <recommendedName>
        <fullName evidence="9">Venom serine protease Bi-VSP</fullName>
        <ecNumber>3.4.21.-</ecNumber>
    </recommendedName>
    <alternativeName>
        <fullName>Thrombin-like enzyme</fullName>
    </alternativeName>
</protein>
<evidence type="ECO:0000250" key="1"/>
<evidence type="ECO:0000250" key="2">
    <source>
        <dbReference type="UniProtKB" id="O97366"/>
    </source>
</evidence>
<evidence type="ECO:0000250" key="3">
    <source>
        <dbReference type="UniProtKB" id="Q9VB68"/>
    </source>
</evidence>
<evidence type="ECO:0000255" key="4"/>
<evidence type="ECO:0000255" key="5">
    <source>
        <dbReference type="PROSITE-ProRule" id="PRU00274"/>
    </source>
</evidence>
<evidence type="ECO:0000255" key="6">
    <source>
        <dbReference type="PROSITE-ProRule" id="PRU01236"/>
    </source>
</evidence>
<evidence type="ECO:0000269" key="7">
    <source>
    </source>
</evidence>
<evidence type="ECO:0000269" key="8">
    <source>
    </source>
</evidence>
<evidence type="ECO:0000303" key="9">
    <source>
    </source>
</evidence>
<evidence type="ECO:0000305" key="10">
    <source>
    </source>
</evidence>
<accession>B5U2W0</accession>
<keyword id="KW-1204">Blood coagulation cascade activating toxin</keyword>
<keyword id="KW-0106">Calcium</keyword>
<keyword id="KW-0903">Direct protein sequencing</keyword>
<keyword id="KW-1015">Disulfide bond</keyword>
<keyword id="KW-1205">Fibrinolytic toxin</keyword>
<keyword id="KW-0325">Glycoprotein</keyword>
<keyword id="KW-1199">Hemostasis impairing toxin</keyword>
<keyword id="KW-0378">Hydrolase</keyword>
<keyword id="KW-0479">Metal-binding</keyword>
<keyword id="KW-0645">Protease</keyword>
<keyword id="KW-0655">Prothrombin activator</keyword>
<keyword id="KW-0964">Secreted</keyword>
<keyword id="KW-0720">Serine protease</keyword>
<keyword id="KW-0732">Signal</keyword>
<keyword id="KW-0800">Toxin</keyword>
<keyword id="KW-0865">Zymogen</keyword>
<sequence>MTGSKMLFACLALIAFLHPLVHVASAQECTTPNNKAGKCLGIRVCKPLLEMLQTQGHAAADFLRQSVCKYENNNPIVCCPNEESREDRGILVGNEYEPLRPPHCGFSNVSHTRVVGGKPAVLGAWPWIAALGFRYPRNPALEPLWKCGGSLISSRHVLTAAHCAEINELYVVRIGDLNLVRNDDGAHPVQIEIESKIIHPDYISGVTKHDIAILKLVEEVPFSEYVYPICLPVEDNLRNNNFERYYPFVAGWGSLAHHGPGSDDLMEVQVPVISNTECKNSYARFAAAHVTDTVLCAGYTQGGKDACQGDSGGPLMLPKKFTFYQIGVVSYGHKCAAAGYPGVYTRVTSYLDDFILPAMQ</sequence>
<name>VSP_BOMIG</name>
<dbReference type="EC" id="3.4.21.-"/>
<dbReference type="EMBL" id="FJ159442">
    <property type="protein sequence ID" value="ACI01044.1"/>
    <property type="molecule type" value="Genomic_DNA"/>
</dbReference>
<dbReference type="EMBL" id="FJ159443">
    <property type="protein sequence ID" value="ACI01045.1"/>
    <property type="molecule type" value="mRNA"/>
</dbReference>
<dbReference type="SMR" id="B5U2W0"/>
<dbReference type="MEROPS" id="S01.511"/>
<dbReference type="GO" id="GO:0005576">
    <property type="term" value="C:extracellular region"/>
    <property type="evidence" value="ECO:0007669"/>
    <property type="project" value="UniProtKB-SubCell"/>
</dbReference>
<dbReference type="GO" id="GO:0046872">
    <property type="term" value="F:metal ion binding"/>
    <property type="evidence" value="ECO:0007669"/>
    <property type="project" value="UniProtKB-KW"/>
</dbReference>
<dbReference type="GO" id="GO:0016504">
    <property type="term" value="F:peptidase activator activity"/>
    <property type="evidence" value="ECO:0007669"/>
    <property type="project" value="UniProtKB-KW"/>
</dbReference>
<dbReference type="GO" id="GO:0004252">
    <property type="term" value="F:serine-type endopeptidase activity"/>
    <property type="evidence" value="ECO:0007669"/>
    <property type="project" value="InterPro"/>
</dbReference>
<dbReference type="GO" id="GO:0090729">
    <property type="term" value="F:toxin activity"/>
    <property type="evidence" value="ECO:0007669"/>
    <property type="project" value="UniProtKB-KW"/>
</dbReference>
<dbReference type="GO" id="GO:0006508">
    <property type="term" value="P:proteolysis"/>
    <property type="evidence" value="ECO:0007669"/>
    <property type="project" value="UniProtKB-KW"/>
</dbReference>
<dbReference type="CDD" id="cd00190">
    <property type="entry name" value="Tryp_SPc"/>
    <property type="match status" value="1"/>
</dbReference>
<dbReference type="FunFam" id="2.40.10.10:FF:000015">
    <property type="entry name" value="Atrial natriuretic peptide-converting enzyme"/>
    <property type="match status" value="1"/>
</dbReference>
<dbReference type="FunFam" id="3.30.1640.30:FF:000001">
    <property type="entry name" value="Serine protease 7"/>
    <property type="match status" value="1"/>
</dbReference>
<dbReference type="Gene3D" id="3.30.1640.30">
    <property type="match status" value="1"/>
</dbReference>
<dbReference type="Gene3D" id="2.40.10.10">
    <property type="entry name" value="Trypsin-like serine proteases"/>
    <property type="match status" value="2"/>
</dbReference>
<dbReference type="InterPro" id="IPR022700">
    <property type="entry name" value="CLIP"/>
</dbReference>
<dbReference type="InterPro" id="IPR038565">
    <property type="entry name" value="CLIP_sf"/>
</dbReference>
<dbReference type="InterPro" id="IPR009003">
    <property type="entry name" value="Peptidase_S1_PA"/>
</dbReference>
<dbReference type="InterPro" id="IPR043504">
    <property type="entry name" value="Peptidase_S1_PA_chymotrypsin"/>
</dbReference>
<dbReference type="InterPro" id="IPR001314">
    <property type="entry name" value="Peptidase_S1A"/>
</dbReference>
<dbReference type="InterPro" id="IPR001254">
    <property type="entry name" value="Trypsin_dom"/>
</dbReference>
<dbReference type="InterPro" id="IPR018114">
    <property type="entry name" value="TRYPSIN_HIS"/>
</dbReference>
<dbReference type="InterPro" id="IPR033116">
    <property type="entry name" value="TRYPSIN_SER"/>
</dbReference>
<dbReference type="PANTHER" id="PTHR24252">
    <property type="entry name" value="ACROSIN-RELATED"/>
    <property type="match status" value="1"/>
</dbReference>
<dbReference type="PANTHER" id="PTHR24252:SF7">
    <property type="entry name" value="HYALIN"/>
    <property type="match status" value="1"/>
</dbReference>
<dbReference type="Pfam" id="PF12032">
    <property type="entry name" value="CLIP"/>
    <property type="match status" value="1"/>
</dbReference>
<dbReference type="Pfam" id="PF00089">
    <property type="entry name" value="Trypsin"/>
    <property type="match status" value="1"/>
</dbReference>
<dbReference type="PRINTS" id="PR00722">
    <property type="entry name" value="CHYMOTRYPSIN"/>
</dbReference>
<dbReference type="SMART" id="SM00680">
    <property type="entry name" value="CLIP"/>
    <property type="match status" value="1"/>
</dbReference>
<dbReference type="SMART" id="SM00020">
    <property type="entry name" value="Tryp_SPc"/>
    <property type="match status" value="1"/>
</dbReference>
<dbReference type="SUPFAM" id="SSF50494">
    <property type="entry name" value="Trypsin-like serine proteases"/>
    <property type="match status" value="1"/>
</dbReference>
<dbReference type="PROSITE" id="PS51888">
    <property type="entry name" value="CLIP"/>
    <property type="match status" value="1"/>
</dbReference>
<dbReference type="PROSITE" id="PS50240">
    <property type="entry name" value="TRYPSIN_DOM"/>
    <property type="match status" value="1"/>
</dbReference>
<dbReference type="PROSITE" id="PS00134">
    <property type="entry name" value="TRYPSIN_HIS"/>
    <property type="match status" value="1"/>
</dbReference>
<dbReference type="PROSITE" id="PS00135">
    <property type="entry name" value="TRYPSIN_SER"/>
    <property type="match status" value="1"/>
</dbReference>
<proteinExistence type="evidence at protein level"/>